<feature type="chain" id="PRO_0000403034" description="FMN reductase (NADH) RutF">
    <location>
        <begin position="1"/>
        <end position="205"/>
    </location>
</feature>
<feature type="region of interest" description="Disordered" evidence="2">
    <location>
        <begin position="171"/>
        <end position="205"/>
    </location>
</feature>
<organism>
    <name type="scientific">Methylorubrum extorquens (strain DSM 6343 / CIP 106787 / DM4)</name>
    <name type="common">Methylobacterium extorquens</name>
    <dbReference type="NCBI Taxonomy" id="661410"/>
    <lineage>
        <taxon>Bacteria</taxon>
        <taxon>Pseudomonadati</taxon>
        <taxon>Pseudomonadota</taxon>
        <taxon>Alphaproteobacteria</taxon>
        <taxon>Hyphomicrobiales</taxon>
        <taxon>Methylobacteriaceae</taxon>
        <taxon>Methylorubrum</taxon>
    </lineage>
</organism>
<evidence type="ECO:0000255" key="1">
    <source>
        <dbReference type="HAMAP-Rule" id="MF_00833"/>
    </source>
</evidence>
<evidence type="ECO:0000256" key="2">
    <source>
        <dbReference type="SAM" id="MobiDB-lite"/>
    </source>
</evidence>
<gene>
    <name evidence="1" type="primary">rutF</name>
    <name type="ordered locus">METDI2408</name>
</gene>
<dbReference type="EC" id="1.5.1.42" evidence="1"/>
<dbReference type="EMBL" id="FP103042">
    <property type="protein sequence ID" value="CAX24010.1"/>
    <property type="molecule type" value="Genomic_DNA"/>
</dbReference>
<dbReference type="RefSeq" id="WP_015822302.1">
    <property type="nucleotide sequence ID" value="NC_012988.1"/>
</dbReference>
<dbReference type="SMR" id="C7CM32"/>
<dbReference type="GeneID" id="72989391"/>
<dbReference type="KEGG" id="mdi:METDI2408"/>
<dbReference type="HOGENOM" id="CLU_059021_2_2_5"/>
<dbReference type="Proteomes" id="UP000008070">
    <property type="component" value="Chromosome"/>
</dbReference>
<dbReference type="GO" id="GO:0010181">
    <property type="term" value="F:FMN binding"/>
    <property type="evidence" value="ECO:0007669"/>
    <property type="project" value="InterPro"/>
</dbReference>
<dbReference type="GO" id="GO:0052874">
    <property type="term" value="F:FMN reductase (NADH) activity"/>
    <property type="evidence" value="ECO:0007669"/>
    <property type="project" value="UniProtKB-EC"/>
</dbReference>
<dbReference type="GO" id="GO:0008752">
    <property type="term" value="F:FMN reductase [NAD(P)H] activity"/>
    <property type="evidence" value="ECO:0007669"/>
    <property type="project" value="InterPro"/>
</dbReference>
<dbReference type="GO" id="GO:0042602">
    <property type="term" value="F:riboflavin reductase (NADPH) activity"/>
    <property type="evidence" value="ECO:0007669"/>
    <property type="project" value="UniProtKB-UniRule"/>
</dbReference>
<dbReference type="GO" id="GO:0019740">
    <property type="term" value="P:nitrogen utilization"/>
    <property type="evidence" value="ECO:0007669"/>
    <property type="project" value="UniProtKB-UniRule"/>
</dbReference>
<dbReference type="GO" id="GO:0006212">
    <property type="term" value="P:uracil catabolic process"/>
    <property type="evidence" value="ECO:0007669"/>
    <property type="project" value="UniProtKB-UniRule"/>
</dbReference>
<dbReference type="Gene3D" id="2.30.110.10">
    <property type="entry name" value="Electron Transport, Fmn-binding Protein, Chain A"/>
    <property type="match status" value="1"/>
</dbReference>
<dbReference type="HAMAP" id="MF_00833">
    <property type="entry name" value="RutF"/>
    <property type="match status" value="1"/>
</dbReference>
<dbReference type="InterPro" id="IPR002563">
    <property type="entry name" value="Flavin_Rdtase-like_dom"/>
</dbReference>
<dbReference type="InterPro" id="IPR050268">
    <property type="entry name" value="NADH-dep_flavin_reductase"/>
</dbReference>
<dbReference type="InterPro" id="IPR019917">
    <property type="entry name" value="RutF"/>
</dbReference>
<dbReference type="InterPro" id="IPR012349">
    <property type="entry name" value="Split_barrel_FMN-bd"/>
</dbReference>
<dbReference type="NCBIfam" id="TIGR03615">
    <property type="entry name" value="RutF"/>
    <property type="match status" value="1"/>
</dbReference>
<dbReference type="PANTHER" id="PTHR30466">
    <property type="entry name" value="FLAVIN REDUCTASE"/>
    <property type="match status" value="1"/>
</dbReference>
<dbReference type="PANTHER" id="PTHR30466:SF1">
    <property type="entry name" value="FMN REDUCTASE (NADH) RUTF"/>
    <property type="match status" value="1"/>
</dbReference>
<dbReference type="Pfam" id="PF01613">
    <property type="entry name" value="Flavin_Reduct"/>
    <property type="match status" value="1"/>
</dbReference>
<dbReference type="SMART" id="SM00903">
    <property type="entry name" value="Flavin_Reduct"/>
    <property type="match status" value="1"/>
</dbReference>
<dbReference type="SUPFAM" id="SSF50475">
    <property type="entry name" value="FMN-binding split barrel"/>
    <property type="match status" value="1"/>
</dbReference>
<proteinExistence type="inferred from homology"/>
<keyword id="KW-0285">Flavoprotein</keyword>
<keyword id="KW-0288">FMN</keyword>
<keyword id="KW-0520">NAD</keyword>
<keyword id="KW-0560">Oxidoreductase</keyword>
<comment type="function">
    <text evidence="1">Catalyzes the reduction of FMN to FMNH2 which is used to reduce pyrimidine by RutA via the Rut pathway.</text>
</comment>
<comment type="catalytic activity">
    <reaction evidence="1">
        <text>FMNH2 + NAD(+) = FMN + NADH + 2 H(+)</text>
        <dbReference type="Rhea" id="RHEA:21620"/>
        <dbReference type="ChEBI" id="CHEBI:15378"/>
        <dbReference type="ChEBI" id="CHEBI:57540"/>
        <dbReference type="ChEBI" id="CHEBI:57618"/>
        <dbReference type="ChEBI" id="CHEBI:57945"/>
        <dbReference type="ChEBI" id="CHEBI:58210"/>
        <dbReference type="EC" id="1.5.1.42"/>
    </reaction>
</comment>
<comment type="similarity">
    <text evidence="1">Belongs to the non-flavoprotein flavin reductase family. RutF subfamily.</text>
</comment>
<sequence>MTAFETESESAAVPVDAAAYREAMSRLASAVHLITTDGPGGRAGFTASAVCSVSDAPPTLLVCINRASSAYAALTQNGTLCVNTLGEGHETVASLFGGRTPVDERFAAGTWRRLPSGAPALTDALVSFDCRIVGRHAVGSHDVLYCAVEAVAASGQADALLYSERRYRTLPRAPRSGSAPAEPARAARALGARPAEGPALALRSA</sequence>
<name>RUTF_METED</name>
<protein>
    <recommendedName>
        <fullName evidence="1">FMN reductase (NADH) RutF</fullName>
        <ecNumber evidence="1">1.5.1.42</ecNumber>
    </recommendedName>
    <alternativeName>
        <fullName evidence="1">FMN reductase</fullName>
    </alternativeName>
    <alternativeName>
        <fullName evidence="1">NADH-flavin reductase RutF</fullName>
    </alternativeName>
    <alternativeName>
        <fullName evidence="1">NADH:flavin oxidoreductase</fullName>
    </alternativeName>
</protein>
<accession>C7CM32</accession>
<reference key="1">
    <citation type="journal article" date="2009" name="PLoS ONE">
        <title>Methylobacterium genome sequences: a reference blueprint to investigate microbial metabolism of C1 compounds from natural and industrial sources.</title>
        <authorList>
            <person name="Vuilleumier S."/>
            <person name="Chistoserdova L."/>
            <person name="Lee M.-C."/>
            <person name="Bringel F."/>
            <person name="Lajus A."/>
            <person name="Zhou Y."/>
            <person name="Gourion B."/>
            <person name="Barbe V."/>
            <person name="Chang J."/>
            <person name="Cruveiller S."/>
            <person name="Dossat C."/>
            <person name="Gillett W."/>
            <person name="Gruffaz C."/>
            <person name="Haugen E."/>
            <person name="Hourcade E."/>
            <person name="Levy R."/>
            <person name="Mangenot S."/>
            <person name="Muller E."/>
            <person name="Nadalig T."/>
            <person name="Pagni M."/>
            <person name="Penny C."/>
            <person name="Peyraud R."/>
            <person name="Robinson D.G."/>
            <person name="Roche D."/>
            <person name="Rouy Z."/>
            <person name="Saenampechek C."/>
            <person name="Salvignol G."/>
            <person name="Vallenet D."/>
            <person name="Wu Z."/>
            <person name="Marx C.J."/>
            <person name="Vorholt J.A."/>
            <person name="Olson M.V."/>
            <person name="Kaul R."/>
            <person name="Weissenbach J."/>
            <person name="Medigue C."/>
            <person name="Lidstrom M.E."/>
        </authorList>
    </citation>
    <scope>NUCLEOTIDE SEQUENCE [LARGE SCALE GENOMIC DNA]</scope>
    <source>
        <strain>DSM 6343 / CIP 106787 / DM4</strain>
    </source>
</reference>